<organism>
    <name type="scientific">Escherichia coli (strain K12)</name>
    <dbReference type="NCBI Taxonomy" id="83333"/>
    <lineage>
        <taxon>Bacteria</taxon>
        <taxon>Pseudomonadati</taxon>
        <taxon>Pseudomonadota</taxon>
        <taxon>Gammaproteobacteria</taxon>
        <taxon>Enterobacterales</taxon>
        <taxon>Enterobacteriaceae</taxon>
        <taxon>Escherichia</taxon>
    </lineage>
</organism>
<proteinExistence type="predicted"/>
<feature type="chain" id="PRO_0000168884" description="Uncharacterized protein YciQ">
    <location>
        <begin position="1"/>
        <end position="631"/>
    </location>
</feature>
<feature type="sequence conflict" description="In Ref. 1; AAB59988." evidence="1" ref="1">
    <original>A</original>
    <variation>G</variation>
    <location>
        <position position="84"/>
    </location>
</feature>
<feature type="sequence conflict" description="In Ref. 1; AAB59988." evidence="1" ref="1">
    <original>N</original>
    <variation>D</variation>
    <location>
        <position position="88"/>
    </location>
</feature>
<gene>
    <name type="primary">yciQ</name>
    <name type="synonym">yciP</name>
    <name type="ordered locus">b1268</name>
    <name type="ordered locus">JW5197</name>
</gene>
<name>YCIQ_ECOLI</name>
<comment type="sequence caution" evidence="1">
    <conflict type="frameshift">
        <sequence resource="EMBL-CDS" id="AAB59988"/>
    </conflict>
</comment>
<comment type="sequence caution" evidence="1">
    <conflict type="frameshift">
        <sequence resource="EMBL-CDS" id="AAB59989"/>
    </conflict>
</comment>
<dbReference type="EMBL" id="U18111">
    <property type="protein sequence ID" value="AAB59988.1"/>
    <property type="status" value="ALT_FRAME"/>
    <property type="molecule type" value="Genomic_DNA"/>
</dbReference>
<dbReference type="EMBL" id="U18111">
    <property type="protein sequence ID" value="AAB59989.1"/>
    <property type="status" value="ALT_FRAME"/>
    <property type="molecule type" value="Genomic_DNA"/>
</dbReference>
<dbReference type="EMBL" id="U00096">
    <property type="protein sequence ID" value="AAC74350.1"/>
    <property type="molecule type" value="Genomic_DNA"/>
</dbReference>
<dbReference type="EMBL" id="AP009048">
    <property type="protein sequence ID" value="BAA14803.2"/>
    <property type="molecule type" value="Genomic_DNA"/>
</dbReference>
<dbReference type="PIR" id="G64874">
    <property type="entry name" value="G64874"/>
</dbReference>
<dbReference type="RefSeq" id="NP_415784.1">
    <property type="nucleotide sequence ID" value="NC_000913.3"/>
</dbReference>
<dbReference type="RefSeq" id="WP_001326916.1">
    <property type="nucleotide sequence ID" value="NZ_SSZK01000031.1"/>
</dbReference>
<dbReference type="BioGRID" id="4260127">
    <property type="interactions" value="13"/>
</dbReference>
<dbReference type="FunCoup" id="P45848">
    <property type="interactions" value="16"/>
</dbReference>
<dbReference type="STRING" id="511145.b1268"/>
<dbReference type="PaxDb" id="511145-b1268"/>
<dbReference type="EnsemblBacteria" id="AAC74350">
    <property type="protein sequence ID" value="AAC74350"/>
    <property type="gene ID" value="b1268"/>
</dbReference>
<dbReference type="GeneID" id="945850"/>
<dbReference type="KEGG" id="ecj:JW5197"/>
<dbReference type="KEGG" id="eco:b1268"/>
<dbReference type="KEGG" id="ecoc:C3026_07430"/>
<dbReference type="PATRIC" id="fig|1411691.4.peg.1016"/>
<dbReference type="EchoBASE" id="EB2797"/>
<dbReference type="eggNOG" id="COG4907">
    <property type="taxonomic scope" value="Bacteria"/>
</dbReference>
<dbReference type="HOGENOM" id="CLU_015045_3_1_6"/>
<dbReference type="InParanoid" id="P45848"/>
<dbReference type="OMA" id="PWHTESI"/>
<dbReference type="OrthoDB" id="9767603at2"/>
<dbReference type="BioCyc" id="EcoCyc:G6636-MONOMER"/>
<dbReference type="PRO" id="PR:P45848"/>
<dbReference type="Proteomes" id="UP000000625">
    <property type="component" value="Chromosome"/>
</dbReference>
<dbReference type="GO" id="GO:0005886">
    <property type="term" value="C:plasma membrane"/>
    <property type="evidence" value="ECO:0000314"/>
    <property type="project" value="EcoCyc"/>
</dbReference>
<dbReference type="InterPro" id="IPR018702">
    <property type="entry name" value="DUF2207"/>
</dbReference>
<dbReference type="InterPro" id="IPR048389">
    <property type="entry name" value="YciQ-like_C"/>
</dbReference>
<dbReference type="Pfam" id="PF09972">
    <property type="entry name" value="DUF2207"/>
    <property type="match status" value="1"/>
</dbReference>
<dbReference type="Pfam" id="PF20990">
    <property type="entry name" value="DUF2207_C"/>
    <property type="match status" value="1"/>
</dbReference>
<sequence>MAGKFRCILLLIAGLFVSSLSYAENTEIPSYEEGISLFDVEATLQPDGVLDIKENIHFQARNQQIKHGFYRDLPRLWMQPDGDAALLNYHIVGVTRDGIPEPWHLDWHIGLMSIVVGDKQRFLPQGDYHYQIHYQVKNAFLREGDSDLLIWNVTGNHWPFEIYKTRFSLQFSNIAGNPFSEIDLFTGEEGDTYRNGRILEDGRIESRDPFYREDFTVLYRWPHALLSNASAPQTTNIFSHLLLPSTSSLLIWFPCLFLVCGWLYLWKRRPQFTPVDVIETDVIPPDYTPGMLRLDAKLVYDDKGFCADIVNLIVKGKIHLEDQSDKNQQILIRVNEGATRNNAVLLPAEQLLLEALFRKGDKVVLTGRRNRVLRRAFLRMQKFYLPRKKSSFYRSDTFLQWGGLAILAVILYGNLSPVGWAGMSLVGDMFIMICWIIPFLFCSLELLFARDDDKPCVNRVIITLFLPLICSGVAFYSLYINVGDVFFYWYMPAGYFTAVCLTGYLTGMGYIFLPKFTQTGQQRYAHGEAIVNYLARKEAATHSGRRRKGETRKLDYALLGWAISANLGREWALRIAPSLSSAIRAPEIARNGVLFSLQTHLSCGANTSLLGRSYSGGGAGGGAGGGGGGGW</sequence>
<reference key="1">
    <citation type="submission" date="1994-12" db="EMBL/GenBank/DDBJ databases">
        <authorList>
            <person name="Milkman R."/>
            <person name="McKane M."/>
        </authorList>
    </citation>
    <scope>NUCLEOTIDE SEQUENCE [GENOMIC DNA]</scope>
    <source>
        <strain>K12 / W3110 / ATCC 27325 / DSM 5911</strain>
    </source>
</reference>
<reference key="2">
    <citation type="journal article" date="1996" name="DNA Res.">
        <title>A 570-kb DNA sequence of the Escherichia coli K-12 genome corresponding to the 28.0-40.1 min region on the linkage map.</title>
        <authorList>
            <person name="Aiba H."/>
            <person name="Baba T."/>
            <person name="Fujita K."/>
            <person name="Hayashi K."/>
            <person name="Inada T."/>
            <person name="Isono K."/>
            <person name="Itoh T."/>
            <person name="Kasai H."/>
            <person name="Kashimoto K."/>
            <person name="Kimura S."/>
            <person name="Kitakawa M."/>
            <person name="Kitagawa M."/>
            <person name="Makino K."/>
            <person name="Miki T."/>
            <person name="Mizobuchi K."/>
            <person name="Mori H."/>
            <person name="Mori T."/>
            <person name="Motomura K."/>
            <person name="Nakade S."/>
            <person name="Nakamura Y."/>
            <person name="Nashimoto H."/>
            <person name="Nishio Y."/>
            <person name="Oshima T."/>
            <person name="Saito N."/>
            <person name="Sampei G."/>
            <person name="Seki Y."/>
            <person name="Sivasundaram S."/>
            <person name="Tagami H."/>
            <person name="Takeda J."/>
            <person name="Takemoto K."/>
            <person name="Takeuchi Y."/>
            <person name="Wada C."/>
            <person name="Yamamoto Y."/>
            <person name="Horiuchi T."/>
        </authorList>
    </citation>
    <scope>NUCLEOTIDE SEQUENCE [LARGE SCALE GENOMIC DNA]</scope>
    <source>
        <strain>K12 / W3110 / ATCC 27325 / DSM 5911</strain>
    </source>
</reference>
<reference key="3">
    <citation type="journal article" date="1997" name="Science">
        <title>The complete genome sequence of Escherichia coli K-12.</title>
        <authorList>
            <person name="Blattner F.R."/>
            <person name="Plunkett G. III"/>
            <person name="Bloch C.A."/>
            <person name="Perna N.T."/>
            <person name="Burland V."/>
            <person name="Riley M."/>
            <person name="Collado-Vides J."/>
            <person name="Glasner J.D."/>
            <person name="Rode C.K."/>
            <person name="Mayhew G.F."/>
            <person name="Gregor J."/>
            <person name="Davis N.W."/>
            <person name="Kirkpatrick H.A."/>
            <person name="Goeden M.A."/>
            <person name="Rose D.J."/>
            <person name="Mau B."/>
            <person name="Shao Y."/>
        </authorList>
    </citation>
    <scope>NUCLEOTIDE SEQUENCE [LARGE SCALE GENOMIC DNA]</scope>
    <source>
        <strain>K12 / MG1655 / ATCC 47076</strain>
    </source>
</reference>
<reference key="4">
    <citation type="journal article" date="2006" name="Mol. Syst. Biol.">
        <title>Highly accurate genome sequences of Escherichia coli K-12 strains MG1655 and W3110.</title>
        <authorList>
            <person name="Hayashi K."/>
            <person name="Morooka N."/>
            <person name="Yamamoto Y."/>
            <person name="Fujita K."/>
            <person name="Isono K."/>
            <person name="Choi S."/>
            <person name="Ohtsubo E."/>
            <person name="Baba T."/>
            <person name="Wanner B.L."/>
            <person name="Mori H."/>
            <person name="Horiuchi T."/>
        </authorList>
    </citation>
    <scope>NUCLEOTIDE SEQUENCE [LARGE SCALE GENOMIC DNA]</scope>
    <source>
        <strain>K12 / W3110 / ATCC 27325 / DSM 5911</strain>
    </source>
</reference>
<keyword id="KW-1185">Reference proteome</keyword>
<protein>
    <recommendedName>
        <fullName>Uncharacterized protein YciQ</fullName>
    </recommendedName>
</protein>
<accession>P45848</accession>
<accession>P45849</accession>
<accession>P76031</accession>
<evidence type="ECO:0000305" key="1"/>